<comment type="function">
    <text evidence="1">Could be involved in insertion of integral membrane proteins into the membrane.</text>
</comment>
<comment type="subcellular location">
    <subcellularLocation>
        <location evidence="1">Cell membrane</location>
        <topology evidence="1">Peripheral membrane protein</topology>
        <orientation evidence="1">Cytoplasmic side</orientation>
    </subcellularLocation>
</comment>
<comment type="similarity">
    <text evidence="1">Belongs to the UPF0161 family.</text>
</comment>
<name>YIDD_ENTFA</name>
<gene>
    <name type="ordered locus">EF_1913</name>
</gene>
<keyword id="KW-1003">Cell membrane</keyword>
<keyword id="KW-0472">Membrane</keyword>
<keyword id="KW-1185">Reference proteome</keyword>
<evidence type="ECO:0000255" key="1">
    <source>
        <dbReference type="HAMAP-Rule" id="MF_00386"/>
    </source>
</evidence>
<sequence>MKNPLIGGVRFYQRFISPGLPARCRYYPTCSQYMIDAIHTHGSVKGTTMGVARILRCHPFVKGGIDYVPLKFRLTKNPDETYHGPYTYRRNKKTEVEKDG</sequence>
<accession>Q833N1</accession>
<protein>
    <recommendedName>
        <fullName evidence="1">Putative membrane protein insertion efficiency factor</fullName>
    </recommendedName>
</protein>
<reference key="1">
    <citation type="journal article" date="2003" name="Science">
        <title>Role of mobile DNA in the evolution of vancomycin-resistant Enterococcus faecalis.</title>
        <authorList>
            <person name="Paulsen I.T."/>
            <person name="Banerjei L."/>
            <person name="Myers G.S.A."/>
            <person name="Nelson K.E."/>
            <person name="Seshadri R."/>
            <person name="Read T.D."/>
            <person name="Fouts D.E."/>
            <person name="Eisen J.A."/>
            <person name="Gill S.R."/>
            <person name="Heidelberg J.F."/>
            <person name="Tettelin H."/>
            <person name="Dodson R.J."/>
            <person name="Umayam L.A."/>
            <person name="Brinkac L.M."/>
            <person name="Beanan M.J."/>
            <person name="Daugherty S.C."/>
            <person name="DeBoy R.T."/>
            <person name="Durkin S.A."/>
            <person name="Kolonay J.F."/>
            <person name="Madupu R."/>
            <person name="Nelson W.C."/>
            <person name="Vamathevan J.J."/>
            <person name="Tran B."/>
            <person name="Upton J."/>
            <person name="Hansen T."/>
            <person name="Shetty J."/>
            <person name="Khouri H.M."/>
            <person name="Utterback T.R."/>
            <person name="Radune D."/>
            <person name="Ketchum K.A."/>
            <person name="Dougherty B.A."/>
            <person name="Fraser C.M."/>
        </authorList>
    </citation>
    <scope>NUCLEOTIDE SEQUENCE [LARGE SCALE GENOMIC DNA]</scope>
    <source>
        <strain>ATCC 700802 / V583</strain>
    </source>
</reference>
<feature type="chain" id="PRO_0000171824" description="Putative membrane protein insertion efficiency factor">
    <location>
        <begin position="1"/>
        <end position="100"/>
    </location>
</feature>
<proteinExistence type="inferred from homology"/>
<organism>
    <name type="scientific">Enterococcus faecalis (strain ATCC 700802 / V583)</name>
    <dbReference type="NCBI Taxonomy" id="226185"/>
    <lineage>
        <taxon>Bacteria</taxon>
        <taxon>Bacillati</taxon>
        <taxon>Bacillota</taxon>
        <taxon>Bacilli</taxon>
        <taxon>Lactobacillales</taxon>
        <taxon>Enterococcaceae</taxon>
        <taxon>Enterococcus</taxon>
    </lineage>
</organism>
<dbReference type="EMBL" id="AE016830">
    <property type="protein sequence ID" value="AAO81665.1"/>
    <property type="molecule type" value="Genomic_DNA"/>
</dbReference>
<dbReference type="RefSeq" id="NP_815595.1">
    <property type="nucleotide sequence ID" value="NC_004668.1"/>
</dbReference>
<dbReference type="STRING" id="226185.EF_1913"/>
<dbReference type="DNASU" id="1200793"/>
<dbReference type="EnsemblBacteria" id="AAO81665">
    <property type="protein sequence ID" value="AAO81665"/>
    <property type="gene ID" value="EF_1913"/>
</dbReference>
<dbReference type="KEGG" id="efa:EF1913"/>
<dbReference type="PATRIC" id="fig|226185.45.peg.1604"/>
<dbReference type="eggNOG" id="COG0759">
    <property type="taxonomic scope" value="Bacteria"/>
</dbReference>
<dbReference type="HOGENOM" id="CLU_144811_2_2_9"/>
<dbReference type="Proteomes" id="UP000001415">
    <property type="component" value="Chromosome"/>
</dbReference>
<dbReference type="GO" id="GO:0005886">
    <property type="term" value="C:plasma membrane"/>
    <property type="evidence" value="ECO:0007669"/>
    <property type="project" value="UniProtKB-SubCell"/>
</dbReference>
<dbReference type="HAMAP" id="MF_00386">
    <property type="entry name" value="UPF0161_YidD"/>
    <property type="match status" value="1"/>
</dbReference>
<dbReference type="InterPro" id="IPR002696">
    <property type="entry name" value="Membr_insert_effic_factor_YidD"/>
</dbReference>
<dbReference type="NCBIfam" id="TIGR00278">
    <property type="entry name" value="membrane protein insertion efficiency factor YidD"/>
    <property type="match status" value="1"/>
</dbReference>
<dbReference type="PANTHER" id="PTHR33383">
    <property type="entry name" value="MEMBRANE PROTEIN INSERTION EFFICIENCY FACTOR-RELATED"/>
    <property type="match status" value="1"/>
</dbReference>
<dbReference type="PANTHER" id="PTHR33383:SF1">
    <property type="entry name" value="MEMBRANE PROTEIN INSERTION EFFICIENCY FACTOR-RELATED"/>
    <property type="match status" value="1"/>
</dbReference>
<dbReference type="Pfam" id="PF01809">
    <property type="entry name" value="YidD"/>
    <property type="match status" value="1"/>
</dbReference>
<dbReference type="SMART" id="SM01234">
    <property type="entry name" value="Haemolytic"/>
    <property type="match status" value="1"/>
</dbReference>